<gene>
    <name evidence="1" type="primary">PAC1</name>
    <name evidence="1" type="synonym">LIS1</name>
    <name type="ORF">GSTUM_00005652001</name>
</gene>
<keyword id="KW-0131">Cell cycle</keyword>
<keyword id="KW-0132">Cell division</keyword>
<keyword id="KW-0175">Coiled coil</keyword>
<keyword id="KW-0963">Cytoplasm</keyword>
<keyword id="KW-0206">Cytoskeleton</keyword>
<keyword id="KW-0493">Microtubule</keyword>
<keyword id="KW-0498">Mitosis</keyword>
<keyword id="KW-1185">Reference proteome</keyword>
<keyword id="KW-0677">Repeat</keyword>
<keyword id="KW-0813">Transport</keyword>
<keyword id="KW-0853">WD repeat</keyword>
<comment type="function">
    <text evidence="1">Positively regulates the activity of the minus-end directed microtubule motor protein dynein. May enhance dynein-mediated microtubule sliding by targeting dynein to the microtubule plus end. Required for nuclear migration during vegetative growth as well as development. Required for retrograde early endosome (EE) transport from the hyphal tip. Required for localization of dynein to the mitotic spindle poles. Recruits additional proteins to the dynein complex at SPBs.</text>
</comment>
<comment type="subunit">
    <text evidence="1">Self-associates. Interacts with NDL1 and dynein.</text>
</comment>
<comment type="subcellular location">
    <subcellularLocation>
        <location evidence="1">Cytoplasm</location>
        <location evidence="1">Cytoskeleton</location>
    </subcellularLocation>
    <subcellularLocation>
        <location evidence="1">Cytoplasm</location>
        <location evidence="1">Cytoskeleton</location>
        <location evidence="1">Spindle pole</location>
    </subcellularLocation>
    <text evidence="1">Localizes to the plus ends of microtubules at the hyphal tip and the mitotic spindle poles.</text>
</comment>
<comment type="domain">
    <text evidence="1">Dimerization mediated by the LisH domain may be required to activate dynein.</text>
</comment>
<comment type="similarity">
    <text evidence="1">Belongs to the WD repeat LIS1/nudF family.</text>
</comment>
<sequence length="452" mass="49691">MSTPVNYLIPRQKDELHKAILAYFSASGLSNTGAALREELGVGDEFLDQNTMKKYEGVLEKKWTGVLRLQKKIMELESRLSSLQSELDSATPTSLTRRNVDPSSWLPRAPAKHVLTSHRNSINSVAFHPIFSVLASGSDDTTIKIWDWELGELERTVKGHTKAVLDLDFGGPKAGVLLVSCSSDLTIKLWDPNNEYKNIRTLTGHDHSVSAVRFIPSAAGEYLVSASRDKTLRVWEVATGYCVKTISGHSDWIRDVEPSHDGRWLLSAGGDQTTRLWDASTAEHKATFLGHEHVVNCCVFAPPSSYPHLATIAGLKKPPPATSSSEFIATGSRDKTIKLWDARGTLLKTLVGHDNWIRALAFHPAGKYLLSVSDDKTIRCWDLTQDGRCVKTVDEAHSHFATCLRWAPAPAKEQTNGEAKTNGIPKAGEKVINVRCVIATGSADMNVRVFAS</sequence>
<organism>
    <name type="scientific">Tuber melanosporum (strain Mel28)</name>
    <name type="common">Perigord black truffle</name>
    <dbReference type="NCBI Taxonomy" id="656061"/>
    <lineage>
        <taxon>Eukaryota</taxon>
        <taxon>Fungi</taxon>
        <taxon>Dikarya</taxon>
        <taxon>Ascomycota</taxon>
        <taxon>Pezizomycotina</taxon>
        <taxon>Pezizomycetes</taxon>
        <taxon>Pezizales</taxon>
        <taxon>Tuberaceae</taxon>
        <taxon>Tuber</taxon>
    </lineage>
</organism>
<protein>
    <recommendedName>
        <fullName evidence="1">Nuclear distribution protein PAC1</fullName>
    </recommendedName>
    <alternativeName>
        <fullName evidence="1">Lissencephaly-1 homolog</fullName>
        <shortName evidence="1">LIS-1</shortName>
    </alternativeName>
    <alternativeName>
        <fullName evidence="1">nudF homolog</fullName>
    </alternativeName>
</protein>
<reference key="1">
    <citation type="journal article" date="2010" name="Nature">
        <title>Perigord black truffle genome uncovers evolutionary origins and mechanisms of symbiosis.</title>
        <authorList>
            <person name="Martin F."/>
            <person name="Kohler A."/>
            <person name="Murat C."/>
            <person name="Balestrini R."/>
            <person name="Coutinho P.M."/>
            <person name="Jaillon O."/>
            <person name="Montanini B."/>
            <person name="Morin E."/>
            <person name="Noel B."/>
            <person name="Percudani R."/>
            <person name="Porcel B."/>
            <person name="Rubini A."/>
            <person name="Amicucci A."/>
            <person name="Amselem J."/>
            <person name="Anthouard V."/>
            <person name="Arcioni S."/>
            <person name="Artiguenave F."/>
            <person name="Aury J.M."/>
            <person name="Ballario P."/>
            <person name="Bolchi A."/>
            <person name="Brenna A."/>
            <person name="Brun A."/>
            <person name="Buee M."/>
            <person name="Cantarel B."/>
            <person name="Chevalier G."/>
            <person name="Couloux A."/>
            <person name="Da Silva C."/>
            <person name="Denoeud F."/>
            <person name="Duplessis S."/>
            <person name="Ghignone S."/>
            <person name="Hilselberger B."/>
            <person name="Iotti M."/>
            <person name="Marcais B."/>
            <person name="Mello A."/>
            <person name="Miranda M."/>
            <person name="Pacioni G."/>
            <person name="Quesneville H."/>
            <person name="Riccioni C."/>
            <person name="Ruotolo R."/>
            <person name="Splivallo R."/>
            <person name="Stocchi V."/>
            <person name="Tisserant E."/>
            <person name="Viscomi A.R."/>
            <person name="Zambonelli A."/>
            <person name="Zampieri E."/>
            <person name="Henrissat B."/>
            <person name="Lebrun M.H."/>
            <person name="Paolocci F."/>
            <person name="Bonfante P."/>
            <person name="Ottonello S."/>
            <person name="Wincker P."/>
        </authorList>
    </citation>
    <scope>NUCLEOTIDE SEQUENCE [LARGE SCALE GENOMIC DNA]</scope>
    <source>
        <strain>Mel28</strain>
    </source>
</reference>
<accession>D5GBI7</accession>
<proteinExistence type="inferred from homology"/>
<name>LIS1_TUBMM</name>
<evidence type="ECO:0000255" key="1">
    <source>
        <dbReference type="HAMAP-Rule" id="MF_03141"/>
    </source>
</evidence>
<feature type="chain" id="PRO_0000405110" description="Nuclear distribution protein PAC1">
    <location>
        <begin position="1"/>
        <end position="452"/>
    </location>
</feature>
<feature type="domain" description="LisH" evidence="1">
    <location>
        <begin position="12"/>
        <end position="44"/>
    </location>
</feature>
<feature type="repeat" description="WD 1">
    <location>
        <begin position="117"/>
        <end position="158"/>
    </location>
</feature>
<feature type="repeat" description="WD 2">
    <location>
        <begin position="160"/>
        <end position="200"/>
    </location>
</feature>
<feature type="repeat" description="WD 3">
    <location>
        <begin position="204"/>
        <end position="245"/>
    </location>
</feature>
<feature type="repeat" description="WD 4">
    <location>
        <begin position="248"/>
        <end position="287"/>
    </location>
</feature>
<feature type="repeat" description="WD 5">
    <location>
        <begin position="290"/>
        <end position="350"/>
    </location>
</feature>
<feature type="repeat" description="WD 6">
    <location>
        <begin position="352"/>
        <end position="391"/>
    </location>
</feature>
<feature type="repeat" description="WD 7">
    <location>
        <begin position="396"/>
        <end position="435"/>
    </location>
</feature>
<feature type="repeat" description="WD 8">
    <location>
        <begin position="437"/>
        <end position="452"/>
    </location>
</feature>
<feature type="coiled-coil region" evidence="1">
    <location>
        <begin position="64"/>
        <end position="91"/>
    </location>
</feature>
<dbReference type="EMBL" id="FN430097">
    <property type="protein sequence ID" value="CAZ81993.1"/>
    <property type="molecule type" value="Genomic_DNA"/>
</dbReference>
<dbReference type="RefSeq" id="XP_002837802.1">
    <property type="nucleotide sequence ID" value="XM_002837756.1"/>
</dbReference>
<dbReference type="SMR" id="D5GBI7"/>
<dbReference type="FunCoup" id="D5GBI7">
    <property type="interactions" value="49"/>
</dbReference>
<dbReference type="STRING" id="656061.D5GBI7"/>
<dbReference type="EnsemblFungi" id="CAZ81993">
    <property type="protein sequence ID" value="CAZ81993"/>
    <property type="gene ID" value="GSTUM_00005652001"/>
</dbReference>
<dbReference type="GeneID" id="9185428"/>
<dbReference type="KEGG" id="tml:GSTUM_00005652001"/>
<dbReference type="eggNOG" id="KOG0295">
    <property type="taxonomic scope" value="Eukaryota"/>
</dbReference>
<dbReference type="HOGENOM" id="CLU_000288_57_15_1"/>
<dbReference type="InParanoid" id="D5GBI7"/>
<dbReference type="OMA" id="WHVATKE"/>
<dbReference type="Proteomes" id="UP000006911">
    <property type="component" value="Unassembled WGS sequence"/>
</dbReference>
<dbReference type="GO" id="GO:0005737">
    <property type="term" value="C:cytoplasm"/>
    <property type="evidence" value="ECO:0007669"/>
    <property type="project" value="UniProtKB-UniRule"/>
</dbReference>
<dbReference type="GO" id="GO:0005874">
    <property type="term" value="C:microtubule"/>
    <property type="evidence" value="ECO:0007669"/>
    <property type="project" value="UniProtKB-KW"/>
</dbReference>
<dbReference type="GO" id="GO:0005875">
    <property type="term" value="C:microtubule associated complex"/>
    <property type="evidence" value="ECO:0007669"/>
    <property type="project" value="UniProtKB-UniRule"/>
</dbReference>
<dbReference type="GO" id="GO:0000922">
    <property type="term" value="C:spindle pole"/>
    <property type="evidence" value="ECO:0007669"/>
    <property type="project" value="UniProtKB-SubCell"/>
</dbReference>
<dbReference type="GO" id="GO:0070840">
    <property type="term" value="F:dynein complex binding"/>
    <property type="evidence" value="ECO:0007669"/>
    <property type="project" value="UniProtKB-UniRule"/>
</dbReference>
<dbReference type="GO" id="GO:0051301">
    <property type="term" value="P:cell division"/>
    <property type="evidence" value="ECO:0007669"/>
    <property type="project" value="UniProtKB-KW"/>
</dbReference>
<dbReference type="GO" id="GO:0000132">
    <property type="term" value="P:establishment of mitotic spindle orientation"/>
    <property type="evidence" value="ECO:0007669"/>
    <property type="project" value="UniProtKB-UniRule"/>
</dbReference>
<dbReference type="GO" id="GO:0051012">
    <property type="term" value="P:microtubule sliding"/>
    <property type="evidence" value="ECO:0007669"/>
    <property type="project" value="UniProtKB-UniRule"/>
</dbReference>
<dbReference type="CDD" id="cd00200">
    <property type="entry name" value="WD40"/>
    <property type="match status" value="1"/>
</dbReference>
<dbReference type="FunFam" id="2.130.10.10:FF:000342">
    <property type="entry name" value="Nuclear distribution protein PAC1"/>
    <property type="match status" value="1"/>
</dbReference>
<dbReference type="FunFam" id="1.20.960.30:FF:000002">
    <property type="entry name" value="Platelet-activating factor acetylhydrolase ib"/>
    <property type="match status" value="1"/>
</dbReference>
<dbReference type="Gene3D" id="1.20.960.30">
    <property type="match status" value="1"/>
</dbReference>
<dbReference type="Gene3D" id="2.130.10.10">
    <property type="entry name" value="YVTN repeat-like/Quinoprotein amine dehydrogenase"/>
    <property type="match status" value="1"/>
</dbReference>
<dbReference type="HAMAP" id="MF_03141">
    <property type="entry name" value="lis1"/>
    <property type="match status" value="1"/>
</dbReference>
<dbReference type="InterPro" id="IPR017252">
    <property type="entry name" value="Dynein_regulator_LIS1"/>
</dbReference>
<dbReference type="InterPro" id="IPR020472">
    <property type="entry name" value="G-protein_beta_WD-40_rep"/>
</dbReference>
<dbReference type="InterPro" id="IPR037190">
    <property type="entry name" value="LIS1_N"/>
</dbReference>
<dbReference type="InterPro" id="IPR006594">
    <property type="entry name" value="LisH"/>
</dbReference>
<dbReference type="InterPro" id="IPR056795">
    <property type="entry name" value="PAC1-like_LisH-like_dom"/>
</dbReference>
<dbReference type="InterPro" id="IPR015943">
    <property type="entry name" value="WD40/YVTN_repeat-like_dom_sf"/>
</dbReference>
<dbReference type="InterPro" id="IPR019775">
    <property type="entry name" value="WD40_repeat_CS"/>
</dbReference>
<dbReference type="InterPro" id="IPR036322">
    <property type="entry name" value="WD40_repeat_dom_sf"/>
</dbReference>
<dbReference type="InterPro" id="IPR001680">
    <property type="entry name" value="WD40_rpt"/>
</dbReference>
<dbReference type="PANTHER" id="PTHR19848:SF8">
    <property type="entry name" value="F-BOX AND WD REPEAT DOMAIN CONTAINING 7"/>
    <property type="match status" value="1"/>
</dbReference>
<dbReference type="PANTHER" id="PTHR19848">
    <property type="entry name" value="WD40 REPEAT PROTEIN"/>
    <property type="match status" value="1"/>
</dbReference>
<dbReference type="Pfam" id="PF24951">
    <property type="entry name" value="LisH_PAC1"/>
    <property type="match status" value="1"/>
</dbReference>
<dbReference type="Pfam" id="PF00400">
    <property type="entry name" value="WD40"/>
    <property type="match status" value="6"/>
</dbReference>
<dbReference type="PIRSF" id="PIRSF037647">
    <property type="entry name" value="Dynein_regulator_Lis1"/>
    <property type="match status" value="1"/>
</dbReference>
<dbReference type="PRINTS" id="PR00320">
    <property type="entry name" value="GPROTEINBRPT"/>
</dbReference>
<dbReference type="SMART" id="SM00320">
    <property type="entry name" value="WD40"/>
    <property type="match status" value="7"/>
</dbReference>
<dbReference type="SUPFAM" id="SSF109925">
    <property type="entry name" value="Lissencephaly-1 protein (Lis-1, PAF-AH alpha) N-terminal domain"/>
    <property type="match status" value="1"/>
</dbReference>
<dbReference type="SUPFAM" id="SSF50978">
    <property type="entry name" value="WD40 repeat-like"/>
    <property type="match status" value="1"/>
</dbReference>
<dbReference type="PROSITE" id="PS50896">
    <property type="entry name" value="LISH"/>
    <property type="match status" value="1"/>
</dbReference>
<dbReference type="PROSITE" id="PS00678">
    <property type="entry name" value="WD_REPEATS_1"/>
    <property type="match status" value="3"/>
</dbReference>
<dbReference type="PROSITE" id="PS50082">
    <property type="entry name" value="WD_REPEATS_2"/>
    <property type="match status" value="6"/>
</dbReference>
<dbReference type="PROSITE" id="PS50294">
    <property type="entry name" value="WD_REPEATS_REGION"/>
    <property type="match status" value="1"/>
</dbReference>